<proteinExistence type="inferred from homology"/>
<keyword id="KW-0156">Chromatin regulator</keyword>
<keyword id="KW-0227">DNA damage</keyword>
<keyword id="KW-0234">DNA repair</keyword>
<keyword id="KW-0341">Growth regulation</keyword>
<keyword id="KW-0539">Nucleus</keyword>
<keyword id="KW-1185">Reference proteome</keyword>
<keyword id="KW-0804">Transcription</keyword>
<keyword id="KW-0805">Transcription regulation</keyword>
<accession>Q54RM0</accession>
<sequence>MDETYEENEKVLVHHQNRIYEAKIIKVDPKTSKSDKKKPLYFIHYLGWKEKWNEWIEPNKILKYTDKNRELQKRTNIKASTTSLNNKKNTKKAKEVKQQQQQQQPIAYDSENSDEDENESELEDGGGEDADEGGEDIEDQENNNNNDTGGEEADDNNTSPRSTGSSSSSSSSKSNNNNNNNNNNNNNNNNNNNNNNNNNNKRKRNDSKSSHFQSTKFIDIEIPLSLKNKLVDDWNSINNEKSILSLPKSPNVKDILNKIIEENDKSSECKEVINGIKQYFNKALGTLLLYKFERPQYDSILKTNPKKSMSDIYGAEHLLRLFVKLPQLLVISNLEEKTITQLKDAFEIVLEYLEKNSSTLFLKEYTIASSPYLKAASSN</sequence>
<protein>
    <recommendedName>
        <fullName>NuA4 complex subunit EAF3 homolog</fullName>
    </recommendedName>
</protein>
<gene>
    <name type="ORF">DDB_G0283075</name>
</gene>
<reference key="1">
    <citation type="journal article" date="2005" name="Nature">
        <title>The genome of the social amoeba Dictyostelium discoideum.</title>
        <authorList>
            <person name="Eichinger L."/>
            <person name="Pachebat J.A."/>
            <person name="Gloeckner G."/>
            <person name="Rajandream M.A."/>
            <person name="Sucgang R."/>
            <person name="Berriman M."/>
            <person name="Song J."/>
            <person name="Olsen R."/>
            <person name="Szafranski K."/>
            <person name="Xu Q."/>
            <person name="Tunggal B."/>
            <person name="Kummerfeld S."/>
            <person name="Madera M."/>
            <person name="Konfortov B.A."/>
            <person name="Rivero F."/>
            <person name="Bankier A.T."/>
            <person name="Lehmann R."/>
            <person name="Hamlin N."/>
            <person name="Davies R."/>
            <person name="Gaudet P."/>
            <person name="Fey P."/>
            <person name="Pilcher K."/>
            <person name="Chen G."/>
            <person name="Saunders D."/>
            <person name="Sodergren E.J."/>
            <person name="Davis P."/>
            <person name="Kerhornou A."/>
            <person name="Nie X."/>
            <person name="Hall N."/>
            <person name="Anjard C."/>
            <person name="Hemphill L."/>
            <person name="Bason N."/>
            <person name="Farbrother P."/>
            <person name="Desany B."/>
            <person name="Just E."/>
            <person name="Morio T."/>
            <person name="Rost R."/>
            <person name="Churcher C.M."/>
            <person name="Cooper J."/>
            <person name="Haydock S."/>
            <person name="van Driessche N."/>
            <person name="Cronin A."/>
            <person name="Goodhead I."/>
            <person name="Muzny D.M."/>
            <person name="Mourier T."/>
            <person name="Pain A."/>
            <person name="Lu M."/>
            <person name="Harper D."/>
            <person name="Lindsay R."/>
            <person name="Hauser H."/>
            <person name="James K.D."/>
            <person name="Quiles M."/>
            <person name="Madan Babu M."/>
            <person name="Saito T."/>
            <person name="Buchrieser C."/>
            <person name="Wardroper A."/>
            <person name="Felder M."/>
            <person name="Thangavelu M."/>
            <person name="Johnson D."/>
            <person name="Knights A."/>
            <person name="Loulseged H."/>
            <person name="Mungall K.L."/>
            <person name="Oliver K."/>
            <person name="Price C."/>
            <person name="Quail M.A."/>
            <person name="Urushihara H."/>
            <person name="Hernandez J."/>
            <person name="Rabbinowitsch E."/>
            <person name="Steffen D."/>
            <person name="Sanders M."/>
            <person name="Ma J."/>
            <person name="Kohara Y."/>
            <person name="Sharp S."/>
            <person name="Simmonds M.N."/>
            <person name="Spiegler S."/>
            <person name="Tivey A."/>
            <person name="Sugano S."/>
            <person name="White B."/>
            <person name="Walker D."/>
            <person name="Woodward J.R."/>
            <person name="Winckler T."/>
            <person name="Tanaka Y."/>
            <person name="Shaulsky G."/>
            <person name="Schleicher M."/>
            <person name="Weinstock G.M."/>
            <person name="Rosenthal A."/>
            <person name="Cox E.C."/>
            <person name="Chisholm R.L."/>
            <person name="Gibbs R.A."/>
            <person name="Loomis W.F."/>
            <person name="Platzer M."/>
            <person name="Kay R.R."/>
            <person name="Williams J.G."/>
            <person name="Dear P.H."/>
            <person name="Noegel A.A."/>
            <person name="Barrell B.G."/>
            <person name="Kuspa A."/>
        </authorList>
    </citation>
    <scope>NUCLEOTIDE SEQUENCE [LARGE SCALE GENOMIC DNA]</scope>
    <source>
        <strain>AX4</strain>
    </source>
</reference>
<name>EAF3_DICDI</name>
<organism>
    <name type="scientific">Dictyostelium discoideum</name>
    <name type="common">Social amoeba</name>
    <dbReference type="NCBI Taxonomy" id="44689"/>
    <lineage>
        <taxon>Eukaryota</taxon>
        <taxon>Amoebozoa</taxon>
        <taxon>Evosea</taxon>
        <taxon>Eumycetozoa</taxon>
        <taxon>Dictyostelia</taxon>
        <taxon>Dictyosteliales</taxon>
        <taxon>Dictyosteliaceae</taxon>
        <taxon>Dictyostelium</taxon>
    </lineage>
</organism>
<comment type="function">
    <text evidence="1">Component of the NuA4 histone acetyltransferase complex which is involved in transcriptional activation of selected genes principally by acetylation of nucleosomal histone H4 and H2A. The NuA4 complex is also involved in DNA repair. Also a component of a complex which acts to repress transcription by deacetylation of nucleosomal histones (By similarity).</text>
</comment>
<comment type="subunit">
    <text evidence="1">Component of the NuA4 histone acetyltransferase complex.</text>
</comment>
<comment type="subcellular location">
    <subcellularLocation>
        <location evidence="3">Nucleus</location>
    </subcellularLocation>
</comment>
<dbReference type="EMBL" id="AAFI02000049">
    <property type="protein sequence ID" value="EAL65981.1"/>
    <property type="molecule type" value="Genomic_DNA"/>
</dbReference>
<dbReference type="RefSeq" id="XP_639331.1">
    <property type="nucleotide sequence ID" value="XM_634239.1"/>
</dbReference>
<dbReference type="SMR" id="Q54RM0"/>
<dbReference type="FunCoup" id="Q54RM0">
    <property type="interactions" value="261"/>
</dbReference>
<dbReference type="STRING" id="44689.Q54RM0"/>
<dbReference type="PaxDb" id="44689-DDB0267076"/>
<dbReference type="EnsemblProtists" id="EAL65981">
    <property type="protein sequence ID" value="EAL65981"/>
    <property type="gene ID" value="DDB_G0283075"/>
</dbReference>
<dbReference type="GeneID" id="8623902"/>
<dbReference type="KEGG" id="ddi:DDB_G0283075"/>
<dbReference type="dictyBase" id="DDB_G0283075"/>
<dbReference type="VEuPathDB" id="AmoebaDB:DDB_G0283075"/>
<dbReference type="eggNOG" id="KOG3001">
    <property type="taxonomic scope" value="Eukaryota"/>
</dbReference>
<dbReference type="HOGENOM" id="CLU_039566_1_1_1"/>
<dbReference type="InParanoid" id="Q54RM0"/>
<dbReference type="OMA" id="GLQTYFD"/>
<dbReference type="PhylomeDB" id="Q54RM0"/>
<dbReference type="PRO" id="PR:Q54RM0"/>
<dbReference type="Proteomes" id="UP000002195">
    <property type="component" value="Chromosome 4"/>
</dbReference>
<dbReference type="GO" id="GO:0035267">
    <property type="term" value="C:NuA4 histone acetyltransferase complex"/>
    <property type="evidence" value="ECO:0000318"/>
    <property type="project" value="GO_Central"/>
</dbReference>
<dbReference type="GO" id="GO:0005634">
    <property type="term" value="C:nucleus"/>
    <property type="evidence" value="ECO:0007669"/>
    <property type="project" value="UniProtKB-SubCell"/>
</dbReference>
<dbReference type="GO" id="GO:0006325">
    <property type="term" value="P:chromatin organization"/>
    <property type="evidence" value="ECO:0007669"/>
    <property type="project" value="UniProtKB-KW"/>
</dbReference>
<dbReference type="GO" id="GO:0006281">
    <property type="term" value="P:DNA repair"/>
    <property type="evidence" value="ECO:0007669"/>
    <property type="project" value="UniProtKB-KW"/>
</dbReference>
<dbReference type="GO" id="GO:0006355">
    <property type="term" value="P:regulation of DNA-templated transcription"/>
    <property type="evidence" value="ECO:0007669"/>
    <property type="project" value="InterPro"/>
</dbReference>
<dbReference type="Gene3D" id="2.30.30.140">
    <property type="match status" value="1"/>
</dbReference>
<dbReference type="Gene3D" id="1.10.274.30">
    <property type="entry name" value="MRG domain"/>
    <property type="match status" value="1"/>
</dbReference>
<dbReference type="InterPro" id="IPR016197">
    <property type="entry name" value="Chromo-like_dom_sf"/>
</dbReference>
<dbReference type="InterPro" id="IPR008676">
    <property type="entry name" value="MRG"/>
</dbReference>
<dbReference type="InterPro" id="IPR038217">
    <property type="entry name" value="MRG_C_sf"/>
</dbReference>
<dbReference type="InterPro" id="IPR026541">
    <property type="entry name" value="MRG_dom"/>
</dbReference>
<dbReference type="InterPro" id="IPR053820">
    <property type="entry name" value="MSL3_chromo-like"/>
</dbReference>
<dbReference type="PANTHER" id="PTHR10880">
    <property type="entry name" value="MORTALITY FACTOR 4-LIKE PROTEIN"/>
    <property type="match status" value="1"/>
</dbReference>
<dbReference type="PANTHER" id="PTHR10880:SF15">
    <property type="entry name" value="MSL COMPLEX SUBUNIT 3"/>
    <property type="match status" value="1"/>
</dbReference>
<dbReference type="Pfam" id="PF05712">
    <property type="entry name" value="MRG"/>
    <property type="match status" value="1"/>
</dbReference>
<dbReference type="Pfam" id="PF22732">
    <property type="entry name" value="MSL3_chromo-like"/>
    <property type="match status" value="1"/>
</dbReference>
<dbReference type="PIRSF" id="PIRSF038133">
    <property type="entry name" value="HAT_Nua4_EAF3/MRG15"/>
    <property type="match status" value="1"/>
</dbReference>
<dbReference type="SUPFAM" id="SSF54160">
    <property type="entry name" value="Chromo domain-like"/>
    <property type="match status" value="1"/>
</dbReference>
<dbReference type="PROSITE" id="PS51640">
    <property type="entry name" value="MRG"/>
    <property type="match status" value="1"/>
</dbReference>
<feature type="chain" id="PRO_0000330868" description="NuA4 complex subunit EAF3 homolog">
    <location>
        <begin position="1"/>
        <end position="379"/>
    </location>
</feature>
<feature type="domain" description="Tudor-knot" evidence="2">
    <location>
        <begin position="6"/>
        <end position="61"/>
    </location>
</feature>
<feature type="domain" description="MRG" evidence="3">
    <location>
        <begin position="214"/>
        <end position="377"/>
    </location>
</feature>
<feature type="region of interest" description="Disordered" evidence="4">
    <location>
        <begin position="75"/>
        <end position="212"/>
    </location>
</feature>
<feature type="compositionally biased region" description="Low complexity" evidence="4">
    <location>
        <begin position="78"/>
        <end position="87"/>
    </location>
</feature>
<feature type="compositionally biased region" description="Acidic residues" evidence="4">
    <location>
        <begin position="111"/>
        <end position="141"/>
    </location>
</feature>
<feature type="compositionally biased region" description="Low complexity" evidence="4">
    <location>
        <begin position="165"/>
        <end position="199"/>
    </location>
</feature>
<evidence type="ECO:0000250" key="1"/>
<evidence type="ECO:0000255" key="2"/>
<evidence type="ECO:0000255" key="3">
    <source>
        <dbReference type="PROSITE-ProRule" id="PRU00972"/>
    </source>
</evidence>
<evidence type="ECO:0000256" key="4">
    <source>
        <dbReference type="SAM" id="MobiDB-lite"/>
    </source>
</evidence>